<dbReference type="EC" id="6.1.1.17"/>
<dbReference type="EMBL" id="Y07614">
    <property type="protein sequence ID" value="CAA68886.1"/>
    <property type="molecule type" value="Genomic_DNA"/>
</dbReference>
<dbReference type="SMR" id="P77984"/>
<dbReference type="STRING" id="1288.AWC37_00055"/>
<dbReference type="eggNOG" id="COG0008">
    <property type="taxonomic scope" value="Bacteria"/>
</dbReference>
<dbReference type="GO" id="GO:0005829">
    <property type="term" value="C:cytosol"/>
    <property type="evidence" value="ECO:0007669"/>
    <property type="project" value="TreeGrafter"/>
</dbReference>
<dbReference type="GO" id="GO:0005524">
    <property type="term" value="F:ATP binding"/>
    <property type="evidence" value="ECO:0007669"/>
    <property type="project" value="UniProtKB-KW"/>
</dbReference>
<dbReference type="GO" id="GO:0004818">
    <property type="term" value="F:glutamate-tRNA ligase activity"/>
    <property type="evidence" value="ECO:0007669"/>
    <property type="project" value="UniProtKB-EC"/>
</dbReference>
<dbReference type="GO" id="GO:0000049">
    <property type="term" value="F:tRNA binding"/>
    <property type="evidence" value="ECO:0007669"/>
    <property type="project" value="InterPro"/>
</dbReference>
<dbReference type="GO" id="GO:0006424">
    <property type="term" value="P:glutamyl-tRNA aminoacylation"/>
    <property type="evidence" value="ECO:0007669"/>
    <property type="project" value="TreeGrafter"/>
</dbReference>
<dbReference type="FunFam" id="1.10.10.350:FF:000002">
    <property type="entry name" value="Glutamate--tRNA ligase"/>
    <property type="match status" value="1"/>
</dbReference>
<dbReference type="Gene3D" id="1.10.10.350">
    <property type="match status" value="1"/>
</dbReference>
<dbReference type="InterPro" id="IPR045462">
    <property type="entry name" value="aa-tRNA-synth_I_cd-bd"/>
</dbReference>
<dbReference type="InterPro" id="IPR020751">
    <property type="entry name" value="aa-tRNA-synth_I_codon-bd_sub2"/>
</dbReference>
<dbReference type="InterPro" id="IPR008925">
    <property type="entry name" value="aa_tRNA-synth_I_cd-bd_sf"/>
</dbReference>
<dbReference type="InterPro" id="IPR049940">
    <property type="entry name" value="GluQ/Sye"/>
</dbReference>
<dbReference type="PANTHER" id="PTHR43311">
    <property type="entry name" value="GLUTAMATE--TRNA LIGASE"/>
    <property type="match status" value="1"/>
</dbReference>
<dbReference type="PANTHER" id="PTHR43311:SF2">
    <property type="entry name" value="GLUTAMATE--TRNA LIGASE, MITOCHONDRIAL-RELATED"/>
    <property type="match status" value="1"/>
</dbReference>
<dbReference type="Pfam" id="PF19269">
    <property type="entry name" value="Anticodon_2"/>
    <property type="match status" value="1"/>
</dbReference>
<dbReference type="SUPFAM" id="SSF48163">
    <property type="entry name" value="An anticodon-binding domain of class I aminoacyl-tRNA synthetases"/>
    <property type="match status" value="1"/>
</dbReference>
<reference key="1">
    <citation type="journal article" date="1997" name="FEMS Microbiol. Lett.">
        <title>Identification of the serine acetyltransferase gene of Staphylococcus xylosus.</title>
        <authorList>
            <person name="Fiegler H."/>
            <person name="Brueckner R."/>
        </authorList>
    </citation>
    <scope>NUCLEOTIDE SEQUENCE [GENOMIC DNA]</scope>
    <source>
        <strain>DSM 20267 / Isolate C2A</strain>
    </source>
</reference>
<proteinExistence type="inferred from homology"/>
<protein>
    <recommendedName>
        <fullName>Glutamate--tRNA ligase</fullName>
        <ecNumber>6.1.1.17</ecNumber>
    </recommendedName>
    <alternativeName>
        <fullName>Glutamyl-tRNA synthetase</fullName>
        <shortName>GluRS</shortName>
    </alternativeName>
</protein>
<evidence type="ECO:0000250" key="1"/>
<evidence type="ECO:0000305" key="2"/>
<accession>P77984</accession>
<sequence length="120" mass="13698">KLVALYQKEMSYAGEIVPLSELFFRDEQILGDDEQEVINGEQVPELMNHLYGKLEVLEPFEAAEIKKTIKEVQKETGIKGKQLFMPIRVAVTGQMHGPELPNTIEVLGREKVLSRLKKYV</sequence>
<name>SYE_STAXY</name>
<keyword id="KW-0030">Aminoacyl-tRNA synthetase</keyword>
<keyword id="KW-0067">ATP-binding</keyword>
<keyword id="KW-0963">Cytoplasm</keyword>
<keyword id="KW-0436">Ligase</keyword>
<keyword id="KW-0547">Nucleotide-binding</keyword>
<keyword id="KW-0648">Protein biosynthesis</keyword>
<organism>
    <name type="scientific">Staphylococcus xylosus</name>
    <dbReference type="NCBI Taxonomy" id="1288"/>
    <lineage>
        <taxon>Bacteria</taxon>
        <taxon>Bacillati</taxon>
        <taxon>Bacillota</taxon>
        <taxon>Bacilli</taxon>
        <taxon>Bacillales</taxon>
        <taxon>Staphylococcaceae</taxon>
        <taxon>Staphylococcus</taxon>
    </lineage>
</organism>
<gene>
    <name type="primary">gltX</name>
</gene>
<comment type="function">
    <text evidence="1">Catalyzes the attachment of glutamate to tRNA(Glu) in a two-step reaction: glutamate is first activated by ATP to form Glu-AMP and then transferred to the acceptor end of tRNA(Glu).</text>
</comment>
<comment type="catalytic activity">
    <reaction>
        <text>tRNA(Glu) + L-glutamate + ATP = L-glutamyl-tRNA(Glu) + AMP + diphosphate</text>
        <dbReference type="Rhea" id="RHEA:23540"/>
        <dbReference type="Rhea" id="RHEA-COMP:9663"/>
        <dbReference type="Rhea" id="RHEA-COMP:9680"/>
        <dbReference type="ChEBI" id="CHEBI:29985"/>
        <dbReference type="ChEBI" id="CHEBI:30616"/>
        <dbReference type="ChEBI" id="CHEBI:33019"/>
        <dbReference type="ChEBI" id="CHEBI:78442"/>
        <dbReference type="ChEBI" id="CHEBI:78520"/>
        <dbReference type="ChEBI" id="CHEBI:456215"/>
        <dbReference type="EC" id="6.1.1.17"/>
    </reaction>
</comment>
<comment type="subunit">
    <text evidence="1">Monomer.</text>
</comment>
<comment type="subcellular location">
    <subcellularLocation>
        <location evidence="1">Cytoplasm</location>
    </subcellularLocation>
</comment>
<comment type="similarity">
    <text evidence="2">Belongs to the class-I aminoacyl-tRNA synthetase family. Glutamate--tRNA ligase type 1 subfamily.</text>
</comment>
<feature type="chain" id="PRO_0000119659" description="Glutamate--tRNA ligase">
    <location>
        <begin position="1" status="less than"/>
        <end position="120"/>
    </location>
</feature>
<feature type="non-terminal residue">
    <location>
        <position position="1"/>
    </location>
</feature>